<feature type="chain" id="PRO_0000153750" description="Translation initiation factor 6">
    <location>
        <begin position="1"/>
        <end position="222"/>
    </location>
</feature>
<name>IF6_METTH</name>
<reference key="1">
    <citation type="journal article" date="1997" name="J. Bacteriol.">
        <title>Complete genome sequence of Methanobacterium thermoautotrophicum deltaH: functional analysis and comparative genomics.</title>
        <authorList>
            <person name="Smith D.R."/>
            <person name="Doucette-Stamm L.A."/>
            <person name="Deloughery C."/>
            <person name="Lee H.-M."/>
            <person name="Dubois J."/>
            <person name="Aldredge T."/>
            <person name="Bashirzadeh R."/>
            <person name="Blakely D."/>
            <person name="Cook R."/>
            <person name="Gilbert K."/>
            <person name="Harrison D."/>
            <person name="Hoang L."/>
            <person name="Keagle P."/>
            <person name="Lumm W."/>
            <person name="Pothier B."/>
            <person name="Qiu D."/>
            <person name="Spadafora R."/>
            <person name="Vicare R."/>
            <person name="Wang Y."/>
            <person name="Wierzbowski J."/>
            <person name="Gibson R."/>
            <person name="Jiwani N."/>
            <person name="Caruso A."/>
            <person name="Bush D."/>
            <person name="Safer H."/>
            <person name="Patwell D."/>
            <person name="Prabhakar S."/>
            <person name="McDougall S."/>
            <person name="Shimer G."/>
            <person name="Goyal A."/>
            <person name="Pietrovski S."/>
            <person name="Church G.M."/>
            <person name="Daniels C.J."/>
            <person name="Mao J.-I."/>
            <person name="Rice P."/>
            <person name="Noelling J."/>
            <person name="Reeve J.N."/>
        </authorList>
    </citation>
    <scope>NUCLEOTIDE SEQUENCE [LARGE SCALE GENOMIC DNA]</scope>
    <source>
        <strain>ATCC 29096 / DSM 1053 / JCM 10044 / NBRC 100330 / Delta H</strain>
    </source>
</reference>
<gene>
    <name evidence="1" type="primary">eif6</name>
    <name type="ordered locus">MTH_1611</name>
</gene>
<keyword id="KW-0002">3D-structure</keyword>
<keyword id="KW-0396">Initiation factor</keyword>
<keyword id="KW-0648">Protein biosynthesis</keyword>
<keyword id="KW-1185">Reference proteome</keyword>
<accession>O27648</accession>
<proteinExistence type="evidence at protein level"/>
<dbReference type="EMBL" id="AE000666">
    <property type="protein sequence ID" value="AAB86084.1"/>
    <property type="molecule type" value="Genomic_DNA"/>
</dbReference>
<dbReference type="PIR" id="C69082">
    <property type="entry name" value="C69082"/>
</dbReference>
<dbReference type="RefSeq" id="WP_010877219.1">
    <property type="nucleotide sequence ID" value="NC_000916.1"/>
</dbReference>
<dbReference type="PDB" id="4ADX">
    <property type="method" value="EM"/>
    <property type="resolution" value="6.60 A"/>
    <property type="chains" value="I=1-222"/>
</dbReference>
<dbReference type="PDBsum" id="4ADX"/>
<dbReference type="EMDB" id="EMD-2012"/>
<dbReference type="SMR" id="O27648"/>
<dbReference type="FunCoup" id="O27648">
    <property type="interactions" value="142"/>
</dbReference>
<dbReference type="STRING" id="187420.MTH_1611"/>
<dbReference type="PaxDb" id="187420-MTH_1611"/>
<dbReference type="EnsemblBacteria" id="AAB86084">
    <property type="protein sequence ID" value="AAB86084"/>
    <property type="gene ID" value="MTH_1611"/>
</dbReference>
<dbReference type="KEGG" id="mth:MTH_1611"/>
<dbReference type="PATRIC" id="fig|187420.15.peg.1575"/>
<dbReference type="HOGENOM" id="CLU_071894_1_0_2"/>
<dbReference type="InParanoid" id="O27648"/>
<dbReference type="EvolutionaryTrace" id="O27648"/>
<dbReference type="Proteomes" id="UP000005223">
    <property type="component" value="Chromosome"/>
</dbReference>
<dbReference type="GO" id="GO:0043022">
    <property type="term" value="F:ribosome binding"/>
    <property type="evidence" value="ECO:0007669"/>
    <property type="project" value="InterPro"/>
</dbReference>
<dbReference type="GO" id="GO:0003743">
    <property type="term" value="F:translation initiation factor activity"/>
    <property type="evidence" value="ECO:0007669"/>
    <property type="project" value="UniProtKB-UniRule"/>
</dbReference>
<dbReference type="GO" id="GO:0042256">
    <property type="term" value="P:cytosolic ribosome assembly"/>
    <property type="evidence" value="ECO:0007669"/>
    <property type="project" value="InterPro"/>
</dbReference>
<dbReference type="Gene3D" id="3.75.10.10">
    <property type="entry name" value="L-arginine/glycine Amidinotransferase, Chain A"/>
    <property type="match status" value="1"/>
</dbReference>
<dbReference type="HAMAP" id="MF_00032">
    <property type="entry name" value="eIF_6"/>
    <property type="match status" value="1"/>
</dbReference>
<dbReference type="InterPro" id="IPR002769">
    <property type="entry name" value="eIF6"/>
</dbReference>
<dbReference type="NCBIfam" id="TIGR00323">
    <property type="entry name" value="eIF-6"/>
    <property type="match status" value="1"/>
</dbReference>
<dbReference type="NCBIfam" id="NF003133">
    <property type="entry name" value="PRK04046.2-5"/>
    <property type="match status" value="1"/>
</dbReference>
<dbReference type="PANTHER" id="PTHR10784">
    <property type="entry name" value="TRANSLATION INITIATION FACTOR 6"/>
    <property type="match status" value="1"/>
</dbReference>
<dbReference type="Pfam" id="PF01912">
    <property type="entry name" value="eIF-6"/>
    <property type="match status" value="1"/>
</dbReference>
<dbReference type="PIRSF" id="PIRSF006413">
    <property type="entry name" value="IF-6"/>
    <property type="match status" value="1"/>
</dbReference>
<dbReference type="SMART" id="SM00654">
    <property type="entry name" value="eIF6"/>
    <property type="match status" value="1"/>
</dbReference>
<dbReference type="SUPFAM" id="SSF55909">
    <property type="entry name" value="Pentein"/>
    <property type="match status" value="1"/>
</dbReference>
<sequence>MIRRINLSGNPNLGVYISVTDSVALIPQNTPEKFEGVLREALEVEVLKVSISGSSLNGALAVGNSNGFVVSNQAMDREIDALAAAGVEAVRIPERFTAVGNLVLANDNGAVASPLLSDDALQVIGDVLEVDVKVSTLAGLNIVGSMGAATNRGALLNPQASSEEIGIIEDTLGVEADVGTVNHGVTLIGACSVANSNGVLVGEETTGPELARIEEALGFLEG</sequence>
<protein>
    <recommendedName>
        <fullName evidence="1">Translation initiation factor 6</fullName>
        <shortName evidence="1">aIF-6</shortName>
    </recommendedName>
</protein>
<comment type="function">
    <text evidence="1">Binds to the 50S ribosomal subunit and prevents its association with the 30S ribosomal subunit to form the 70S initiation complex.</text>
</comment>
<comment type="similarity">
    <text evidence="1">Belongs to the eIF-6 family.</text>
</comment>
<organism>
    <name type="scientific">Methanothermobacter thermautotrophicus (strain ATCC 29096 / DSM 1053 / JCM 10044 / NBRC 100330 / Delta H)</name>
    <name type="common">Methanobacterium thermoautotrophicum</name>
    <dbReference type="NCBI Taxonomy" id="187420"/>
    <lineage>
        <taxon>Archaea</taxon>
        <taxon>Methanobacteriati</taxon>
        <taxon>Methanobacteriota</taxon>
        <taxon>Methanomada group</taxon>
        <taxon>Methanobacteria</taxon>
        <taxon>Methanobacteriales</taxon>
        <taxon>Methanobacteriaceae</taxon>
        <taxon>Methanothermobacter</taxon>
    </lineage>
</organism>
<evidence type="ECO:0000255" key="1">
    <source>
        <dbReference type="HAMAP-Rule" id="MF_00032"/>
    </source>
</evidence>